<keyword id="KW-0963">Cytoplasm</keyword>
<keyword id="KW-0238">DNA-binding</keyword>
<keyword id="KW-0597">Phosphoprotein</keyword>
<keyword id="KW-1185">Reference proteome</keyword>
<keyword id="KW-0804">Transcription</keyword>
<keyword id="KW-0805">Transcription regulation</keyword>
<keyword id="KW-0902">Two-component regulatory system</keyword>
<reference key="1">
    <citation type="journal article" date="2005" name="Infect. Immun.">
        <title>Whole-genome analyses of speciation events in pathogenic Brucellae.</title>
        <authorList>
            <person name="Chain P.S."/>
            <person name="Comerci D.J."/>
            <person name="Tolmasky M.E."/>
            <person name="Larimer F.W."/>
            <person name="Malfatti S.A."/>
            <person name="Vergez L.M."/>
            <person name="Aguero F."/>
            <person name="Land M.L."/>
            <person name="Ugalde R.A."/>
            <person name="Garcia E."/>
        </authorList>
    </citation>
    <scope>NUCLEOTIDE SEQUENCE [LARGE SCALE GENOMIC DNA]</scope>
    <source>
        <strain>2308</strain>
    </source>
</reference>
<dbReference type="EMBL" id="AM040265">
    <property type="protein sequence ID" value="CAJ12794.1"/>
    <property type="molecule type" value="Genomic_DNA"/>
</dbReference>
<dbReference type="RefSeq" id="WP_002966022.1">
    <property type="nucleotide sequence ID" value="NZ_KN046823.1"/>
</dbReference>
<dbReference type="SMR" id="Q2YKN1"/>
<dbReference type="IntAct" id="Q2YKN1">
    <property type="interactions" value="1"/>
</dbReference>
<dbReference type="STRING" id="359391.BAB2_0628"/>
<dbReference type="KEGG" id="bmf:BAB2_0628"/>
<dbReference type="PATRIC" id="fig|359391.11.peg.2810"/>
<dbReference type="HOGENOM" id="CLU_000445_69_17_5"/>
<dbReference type="PRO" id="PR:Q2YKN1"/>
<dbReference type="Proteomes" id="UP000002719">
    <property type="component" value="Chromosome II"/>
</dbReference>
<dbReference type="GO" id="GO:0005737">
    <property type="term" value="C:cytoplasm"/>
    <property type="evidence" value="ECO:0007669"/>
    <property type="project" value="UniProtKB-SubCell"/>
</dbReference>
<dbReference type="GO" id="GO:0003677">
    <property type="term" value="F:DNA binding"/>
    <property type="evidence" value="ECO:0007669"/>
    <property type="project" value="UniProtKB-KW"/>
</dbReference>
<dbReference type="GO" id="GO:0000160">
    <property type="term" value="P:phosphorelay signal transduction system"/>
    <property type="evidence" value="ECO:0007669"/>
    <property type="project" value="UniProtKB-KW"/>
</dbReference>
<dbReference type="CDD" id="cd17548">
    <property type="entry name" value="REC_DivK-like"/>
    <property type="match status" value="1"/>
</dbReference>
<dbReference type="Gene3D" id="3.40.50.2300">
    <property type="match status" value="1"/>
</dbReference>
<dbReference type="InterPro" id="IPR050595">
    <property type="entry name" value="Bact_response_regulator"/>
</dbReference>
<dbReference type="InterPro" id="IPR011006">
    <property type="entry name" value="CheY-like_superfamily"/>
</dbReference>
<dbReference type="InterPro" id="IPR001789">
    <property type="entry name" value="Sig_transdc_resp-reg_receiver"/>
</dbReference>
<dbReference type="PANTHER" id="PTHR44591:SF3">
    <property type="entry name" value="RESPONSE REGULATORY DOMAIN-CONTAINING PROTEIN"/>
    <property type="match status" value="1"/>
</dbReference>
<dbReference type="PANTHER" id="PTHR44591">
    <property type="entry name" value="STRESS RESPONSE REGULATOR PROTEIN 1"/>
    <property type="match status" value="1"/>
</dbReference>
<dbReference type="Pfam" id="PF00072">
    <property type="entry name" value="Response_reg"/>
    <property type="match status" value="1"/>
</dbReference>
<dbReference type="SMART" id="SM00448">
    <property type="entry name" value="REC"/>
    <property type="match status" value="1"/>
</dbReference>
<dbReference type="SUPFAM" id="SSF52172">
    <property type="entry name" value="CheY-like"/>
    <property type="match status" value="1"/>
</dbReference>
<dbReference type="PROSITE" id="PS50110">
    <property type="entry name" value="RESPONSE_REGULATORY"/>
    <property type="match status" value="1"/>
</dbReference>
<proteinExistence type="inferred from homology"/>
<sequence length="123" mass="13973">MTKSVMIVEDNELNMKLFRDLIEASGYETIRTRSGLEALDLAREHHPDLILMDIQLPEVSGLEVTKWLKDDEELRHIPVIAVTAFAMKGDEERIRQGGCEAYISKPISVPRFIETIKSYLGDA</sequence>
<protein>
    <recommendedName>
        <fullName>Polar-differentiation response regulator DivK</fullName>
    </recommendedName>
</protein>
<gene>
    <name type="primary">divK</name>
    <name type="ordered locus">BAB2_0628</name>
</gene>
<feature type="chain" id="PRO_0000363205" description="Polar-differentiation response regulator DivK">
    <location>
        <begin position="1"/>
        <end position="123"/>
    </location>
</feature>
<feature type="domain" description="Response regulatory" evidence="2">
    <location>
        <begin position="4"/>
        <end position="120"/>
    </location>
</feature>
<feature type="modified residue" description="4-aspartylphosphate" evidence="2">
    <location>
        <position position="53"/>
    </location>
</feature>
<organism>
    <name type="scientific">Brucella abortus (strain 2308)</name>
    <dbReference type="NCBI Taxonomy" id="359391"/>
    <lineage>
        <taxon>Bacteria</taxon>
        <taxon>Pseudomonadati</taxon>
        <taxon>Pseudomonadota</taxon>
        <taxon>Alphaproteobacteria</taxon>
        <taxon>Hyphomicrobiales</taxon>
        <taxon>Brucellaceae</taxon>
        <taxon>Brucella/Ochrobactrum group</taxon>
        <taxon>Brucella</taxon>
    </lineage>
</organism>
<name>DIVK_BRUA2</name>
<evidence type="ECO:0000250" key="1"/>
<evidence type="ECO:0000255" key="2">
    <source>
        <dbReference type="PROSITE-ProRule" id="PRU00169"/>
    </source>
</evidence>
<accession>Q2YKN1</accession>
<comment type="function">
    <text evidence="1">Essential protein that is involved in the control of cell division, probably through the regulation of ctrA. Its phosphorylation status is regulated by PdhS (By similarity).</text>
</comment>
<comment type="subunit">
    <text evidence="1">Interacts with DivL, PleC, DivJ and PdhS.</text>
</comment>
<comment type="subcellular location">
    <subcellularLocation>
        <location evidence="1">Cytoplasm</location>
    </subcellularLocation>
    <text evidence="1">Localized at one pole of the cell. Colocalizes with PdhS (By similarity).</text>
</comment>